<organism>
    <name type="scientific">Leptospira borgpetersenii serovar Hardjo-bovis (strain L550)</name>
    <dbReference type="NCBI Taxonomy" id="355276"/>
    <lineage>
        <taxon>Bacteria</taxon>
        <taxon>Pseudomonadati</taxon>
        <taxon>Spirochaetota</taxon>
        <taxon>Spirochaetia</taxon>
        <taxon>Leptospirales</taxon>
        <taxon>Leptospiraceae</taxon>
        <taxon>Leptospira</taxon>
    </lineage>
</organism>
<feature type="chain" id="PRO_1000138955" description="Orotidine 5'-phosphate decarboxylase">
    <location>
        <begin position="1"/>
        <end position="271"/>
    </location>
</feature>
<feature type="active site" description="Proton donor" evidence="1">
    <location>
        <position position="97"/>
    </location>
</feature>
<keyword id="KW-0210">Decarboxylase</keyword>
<keyword id="KW-0456">Lyase</keyword>
<keyword id="KW-0665">Pyrimidine biosynthesis</keyword>
<reference key="1">
    <citation type="journal article" date="2006" name="Proc. Natl. Acad. Sci. U.S.A.">
        <title>Genome reduction in Leptospira borgpetersenii reflects limited transmission potential.</title>
        <authorList>
            <person name="Bulach D.M."/>
            <person name="Zuerner R.L."/>
            <person name="Wilson P."/>
            <person name="Seemann T."/>
            <person name="McGrath A."/>
            <person name="Cullen P.A."/>
            <person name="Davis J."/>
            <person name="Johnson M."/>
            <person name="Kuczek E."/>
            <person name="Alt D.P."/>
            <person name="Peterson-Burch B."/>
            <person name="Coppel R.L."/>
            <person name="Rood J.I."/>
            <person name="Davies J.K."/>
            <person name="Adler B."/>
        </authorList>
    </citation>
    <scope>NUCLEOTIDE SEQUENCE [LARGE SCALE GENOMIC DNA]</scope>
    <source>
        <strain>L550</strain>
    </source>
</reference>
<comment type="catalytic activity">
    <reaction evidence="1">
        <text>orotidine 5'-phosphate + H(+) = UMP + CO2</text>
        <dbReference type="Rhea" id="RHEA:11596"/>
        <dbReference type="ChEBI" id="CHEBI:15378"/>
        <dbReference type="ChEBI" id="CHEBI:16526"/>
        <dbReference type="ChEBI" id="CHEBI:57538"/>
        <dbReference type="ChEBI" id="CHEBI:57865"/>
        <dbReference type="EC" id="4.1.1.23"/>
    </reaction>
</comment>
<comment type="pathway">
    <text evidence="1">Pyrimidine metabolism; UMP biosynthesis via de novo pathway; UMP from orotate: step 2/2.</text>
</comment>
<comment type="similarity">
    <text evidence="1">Belongs to the OMP decarboxylase family. Type 2 subfamily.</text>
</comment>
<gene>
    <name evidence="1" type="primary">pyrF</name>
    <name type="ordered locus">LBL_4241</name>
</gene>
<protein>
    <recommendedName>
        <fullName evidence="1">Orotidine 5'-phosphate decarboxylase</fullName>
        <ecNumber evidence="1">4.1.1.23</ecNumber>
    </recommendedName>
    <alternativeName>
        <fullName evidence="1">OMP decarboxylase</fullName>
        <shortName evidence="1">OMPDCase</shortName>
        <shortName evidence="1">OMPdecase</shortName>
    </alternativeName>
</protein>
<proteinExistence type="inferred from homology"/>
<sequence>MNFQSKFLTRSQSLKSLLCVGLDPDYCKLPEIIKRSPEPLVHFCREIIDATAPYAVAYKPNIAFFEVFGSSGIRQFEKVIGHLKNNYPQIPIVADIKRGDLDNTARQYARYYFGDLQVDSLTLSPYMGLDTLRPFLEYQDHLVFWLCLTSNPDSIQFQKKRFSETGRTLYEEVAYVANSISPLNLGFVVGATNTYELEILRKQNPDRIFLIPGFGAQGAKLDDLLPVCGRYSLINSSRGIHFASDGLDFAARANQEAEKIHNAMQARFVFL</sequence>
<accession>Q04WJ4</accession>
<dbReference type="EC" id="4.1.1.23" evidence="1"/>
<dbReference type="EMBL" id="CP000349">
    <property type="protein sequence ID" value="ABJ80551.1"/>
    <property type="molecule type" value="Genomic_DNA"/>
</dbReference>
<dbReference type="RefSeq" id="WP_002755808.1">
    <property type="nucleotide sequence ID" value="NC_008509.1"/>
</dbReference>
<dbReference type="SMR" id="Q04WJ4"/>
<dbReference type="KEGG" id="lbl:LBL_4241"/>
<dbReference type="HOGENOM" id="CLU_060704_1_0_12"/>
<dbReference type="UniPathway" id="UPA00070">
    <property type="reaction ID" value="UER00120"/>
</dbReference>
<dbReference type="GO" id="GO:0004590">
    <property type="term" value="F:orotidine-5'-phosphate decarboxylase activity"/>
    <property type="evidence" value="ECO:0007669"/>
    <property type="project" value="UniProtKB-UniRule"/>
</dbReference>
<dbReference type="GO" id="GO:0006207">
    <property type="term" value="P:'de novo' pyrimidine nucleobase biosynthetic process"/>
    <property type="evidence" value="ECO:0007669"/>
    <property type="project" value="InterPro"/>
</dbReference>
<dbReference type="GO" id="GO:0044205">
    <property type="term" value="P:'de novo' UMP biosynthetic process"/>
    <property type="evidence" value="ECO:0007669"/>
    <property type="project" value="UniProtKB-UniRule"/>
</dbReference>
<dbReference type="CDD" id="cd04725">
    <property type="entry name" value="OMP_decarboxylase_like"/>
    <property type="match status" value="1"/>
</dbReference>
<dbReference type="Gene3D" id="3.20.20.70">
    <property type="entry name" value="Aldolase class I"/>
    <property type="match status" value="1"/>
</dbReference>
<dbReference type="HAMAP" id="MF_01215">
    <property type="entry name" value="OMPdecase_type2"/>
    <property type="match status" value="1"/>
</dbReference>
<dbReference type="InterPro" id="IPR013785">
    <property type="entry name" value="Aldolase_TIM"/>
</dbReference>
<dbReference type="InterPro" id="IPR011995">
    <property type="entry name" value="OMPdecase_type-2"/>
</dbReference>
<dbReference type="InterPro" id="IPR001754">
    <property type="entry name" value="OMPdeCOase_dom"/>
</dbReference>
<dbReference type="InterPro" id="IPR011060">
    <property type="entry name" value="RibuloseP-bd_barrel"/>
</dbReference>
<dbReference type="NCBIfam" id="TIGR02127">
    <property type="entry name" value="pyrF_sub2"/>
    <property type="match status" value="1"/>
</dbReference>
<dbReference type="PANTHER" id="PTHR43375">
    <property type="entry name" value="OROTIDINE 5'-PHOSPHATE DECARBOXYLASE"/>
    <property type="match status" value="1"/>
</dbReference>
<dbReference type="PANTHER" id="PTHR43375:SF1">
    <property type="entry name" value="OROTIDINE 5'-PHOSPHATE DECARBOXYLASE"/>
    <property type="match status" value="1"/>
</dbReference>
<dbReference type="Pfam" id="PF00215">
    <property type="entry name" value="OMPdecase"/>
    <property type="match status" value="1"/>
</dbReference>
<dbReference type="SMART" id="SM00934">
    <property type="entry name" value="OMPdecase"/>
    <property type="match status" value="1"/>
</dbReference>
<dbReference type="SUPFAM" id="SSF51366">
    <property type="entry name" value="Ribulose-phoshate binding barrel"/>
    <property type="match status" value="1"/>
</dbReference>
<name>PYRF_LEPBL</name>
<evidence type="ECO:0000255" key="1">
    <source>
        <dbReference type="HAMAP-Rule" id="MF_01215"/>
    </source>
</evidence>